<accession>Q6ABL2</accession>
<protein>
    <recommendedName>
        <fullName evidence="1">DNA replication and repair protein RecF</fullName>
    </recommendedName>
</protein>
<dbReference type="EMBL" id="AE017283">
    <property type="protein sequence ID" value="AAT81769.1"/>
    <property type="molecule type" value="Genomic_DNA"/>
</dbReference>
<dbReference type="SMR" id="Q6ABL2"/>
<dbReference type="EnsemblBacteria" id="AAT81769">
    <property type="protein sequence ID" value="AAT81769"/>
    <property type="gene ID" value="PPA0004"/>
</dbReference>
<dbReference type="KEGG" id="pac:PPA0004"/>
<dbReference type="PATRIC" id="fig|267747.3.peg.4"/>
<dbReference type="eggNOG" id="COG1195">
    <property type="taxonomic scope" value="Bacteria"/>
</dbReference>
<dbReference type="HOGENOM" id="CLU_040267_1_1_11"/>
<dbReference type="Proteomes" id="UP000000603">
    <property type="component" value="Chromosome"/>
</dbReference>
<dbReference type="GO" id="GO:0005737">
    <property type="term" value="C:cytoplasm"/>
    <property type="evidence" value="ECO:0007669"/>
    <property type="project" value="UniProtKB-SubCell"/>
</dbReference>
<dbReference type="GO" id="GO:0005524">
    <property type="term" value="F:ATP binding"/>
    <property type="evidence" value="ECO:0007669"/>
    <property type="project" value="UniProtKB-UniRule"/>
</dbReference>
<dbReference type="GO" id="GO:0003697">
    <property type="term" value="F:single-stranded DNA binding"/>
    <property type="evidence" value="ECO:0007669"/>
    <property type="project" value="UniProtKB-UniRule"/>
</dbReference>
<dbReference type="GO" id="GO:0006260">
    <property type="term" value="P:DNA replication"/>
    <property type="evidence" value="ECO:0007669"/>
    <property type="project" value="UniProtKB-UniRule"/>
</dbReference>
<dbReference type="GO" id="GO:0000731">
    <property type="term" value="P:DNA synthesis involved in DNA repair"/>
    <property type="evidence" value="ECO:0007669"/>
    <property type="project" value="TreeGrafter"/>
</dbReference>
<dbReference type="GO" id="GO:0006302">
    <property type="term" value="P:double-strand break repair"/>
    <property type="evidence" value="ECO:0007669"/>
    <property type="project" value="TreeGrafter"/>
</dbReference>
<dbReference type="GO" id="GO:0009432">
    <property type="term" value="P:SOS response"/>
    <property type="evidence" value="ECO:0007669"/>
    <property type="project" value="UniProtKB-UniRule"/>
</dbReference>
<dbReference type="Gene3D" id="3.40.50.300">
    <property type="entry name" value="P-loop containing nucleotide triphosphate hydrolases"/>
    <property type="match status" value="1"/>
</dbReference>
<dbReference type="Gene3D" id="1.20.1050.90">
    <property type="entry name" value="RecF/RecN/SMC, N-terminal domain"/>
    <property type="match status" value="1"/>
</dbReference>
<dbReference type="HAMAP" id="MF_00365">
    <property type="entry name" value="RecF"/>
    <property type="match status" value="1"/>
</dbReference>
<dbReference type="InterPro" id="IPR001238">
    <property type="entry name" value="DNA-binding_RecF"/>
</dbReference>
<dbReference type="InterPro" id="IPR018078">
    <property type="entry name" value="DNA-binding_RecF_CS"/>
</dbReference>
<dbReference type="InterPro" id="IPR027417">
    <property type="entry name" value="P-loop_NTPase"/>
</dbReference>
<dbReference type="InterPro" id="IPR003395">
    <property type="entry name" value="RecF/RecN/SMC_N"/>
</dbReference>
<dbReference type="InterPro" id="IPR042174">
    <property type="entry name" value="RecF_2"/>
</dbReference>
<dbReference type="NCBIfam" id="TIGR00611">
    <property type="entry name" value="recf"/>
    <property type="match status" value="1"/>
</dbReference>
<dbReference type="PANTHER" id="PTHR32182">
    <property type="entry name" value="DNA REPLICATION AND REPAIR PROTEIN RECF"/>
    <property type="match status" value="1"/>
</dbReference>
<dbReference type="PANTHER" id="PTHR32182:SF0">
    <property type="entry name" value="DNA REPLICATION AND REPAIR PROTEIN RECF"/>
    <property type="match status" value="1"/>
</dbReference>
<dbReference type="Pfam" id="PF02463">
    <property type="entry name" value="SMC_N"/>
    <property type="match status" value="1"/>
</dbReference>
<dbReference type="SUPFAM" id="SSF52540">
    <property type="entry name" value="P-loop containing nucleoside triphosphate hydrolases"/>
    <property type="match status" value="1"/>
</dbReference>
<dbReference type="PROSITE" id="PS00618">
    <property type="entry name" value="RECF_2"/>
    <property type="match status" value="1"/>
</dbReference>
<keyword id="KW-0067">ATP-binding</keyword>
<keyword id="KW-0963">Cytoplasm</keyword>
<keyword id="KW-0227">DNA damage</keyword>
<keyword id="KW-0234">DNA repair</keyword>
<keyword id="KW-0235">DNA replication</keyword>
<keyword id="KW-0238">DNA-binding</keyword>
<keyword id="KW-0547">Nucleotide-binding</keyword>
<keyword id="KW-0742">SOS response</keyword>
<name>RECF_CUTAK</name>
<reference key="1">
    <citation type="journal article" date="2004" name="Science">
        <title>The complete genome sequence of Propionibacterium acnes, a commensal of human skin.</title>
        <authorList>
            <person name="Brueggemann H."/>
            <person name="Henne A."/>
            <person name="Hoster F."/>
            <person name="Liesegang H."/>
            <person name="Wiezer A."/>
            <person name="Strittmatter A."/>
            <person name="Hujer S."/>
            <person name="Duerre P."/>
            <person name="Gottschalk G."/>
        </authorList>
    </citation>
    <scope>NUCLEOTIDE SEQUENCE [LARGE SCALE GENOMIC DNA]</scope>
    <source>
        <strain>DSM 16379 / KPA171202</strain>
    </source>
</reference>
<evidence type="ECO:0000255" key="1">
    <source>
        <dbReference type="HAMAP-Rule" id="MF_00365"/>
    </source>
</evidence>
<feature type="chain" id="PRO_0000236132" description="DNA replication and repair protein RecF">
    <location>
        <begin position="1"/>
        <end position="394"/>
    </location>
</feature>
<feature type="binding site" evidence="1">
    <location>
        <begin position="30"/>
        <end position="37"/>
    </location>
    <ligand>
        <name>ATP</name>
        <dbReference type="ChEBI" id="CHEBI:30616"/>
    </ligand>
</feature>
<organism>
    <name type="scientific">Cutibacterium acnes (strain DSM 16379 / KPA171202)</name>
    <name type="common">Propionibacterium acnes</name>
    <dbReference type="NCBI Taxonomy" id="267747"/>
    <lineage>
        <taxon>Bacteria</taxon>
        <taxon>Bacillati</taxon>
        <taxon>Actinomycetota</taxon>
        <taxon>Actinomycetes</taxon>
        <taxon>Propionibacteriales</taxon>
        <taxon>Propionibacteriaceae</taxon>
        <taxon>Cutibacterium</taxon>
    </lineage>
</organism>
<sequence>MFVEHLELVDFRSYVRADVPMAAGATTFIGSNGQGKTNLVEAVEYLSTLSSHRVSNDTPLVRLGADQAVVRGRVRAGTDDARSLLLEVEINARRANRARINRAPLTRPRDILGVLRTVVFSPNDLAVVRGDPSDRRAFLDGLVVTRWPRMAAVKSDYERVLKQRNALLKSLSGKGRSAGAEIGATMDIWDNELATIGAELLSARLDTLSAVMPLTSAAYREIAPVNDLTTASYKSTIDLEGLWSPPQERESSTPIDRKELANRFLDTLAKRRADELIRGVTLVGPQRDDIILHIGEMPAKGYASHGESWSLALALRLGSFQLLRDDGIEPVLVLDDVFAELDATRRDRLASSVVQADQVLVTAAVASDVPEILRGERFDVGGGQVLAYEGNNDD</sequence>
<gene>
    <name evidence="1" type="primary">recF</name>
    <name type="ordered locus">PPA0004</name>
</gene>
<proteinExistence type="inferred from homology"/>
<comment type="function">
    <text evidence="1">The RecF protein is involved in DNA metabolism; it is required for DNA replication and normal SOS inducibility. RecF binds preferentially to single-stranded, linear DNA. It also seems to bind ATP.</text>
</comment>
<comment type="subcellular location">
    <subcellularLocation>
        <location evidence="1">Cytoplasm</location>
    </subcellularLocation>
</comment>
<comment type="similarity">
    <text evidence="1">Belongs to the RecF family.</text>
</comment>